<reference key="1">
    <citation type="journal article" date="2007" name="Proc. Natl. Acad. Sci. U.S.A.">
        <title>Genome sequencing and comparative analysis of Saccharomyces cerevisiae strain YJM789.</title>
        <authorList>
            <person name="Wei W."/>
            <person name="McCusker J.H."/>
            <person name="Hyman R.W."/>
            <person name="Jones T."/>
            <person name="Ning Y."/>
            <person name="Cao Z."/>
            <person name="Gu Z."/>
            <person name="Bruno D."/>
            <person name="Miranda M."/>
            <person name="Nguyen M."/>
            <person name="Wilhelmy J."/>
            <person name="Komp C."/>
            <person name="Tamse R."/>
            <person name="Wang X."/>
            <person name="Jia P."/>
            <person name="Luedi P."/>
            <person name="Oefner P.J."/>
            <person name="David L."/>
            <person name="Dietrich F.S."/>
            <person name="Li Y."/>
            <person name="Davis R.W."/>
            <person name="Steinmetz L.M."/>
        </authorList>
    </citation>
    <scope>NUCLEOTIDE SEQUENCE [LARGE SCALE GENOMIC DNA]</scope>
    <source>
        <strain>YJM789</strain>
    </source>
</reference>
<sequence length="264" mass="30513">MKIQTNAVNVLQRTSAYLKSGLLKETPAWYNVVASIPPSTKFTREPRFKNPSNGHIIGKLVDVTEQPHANNKGLYKTRPNSSDKRVGVKRLYRPPKLTYVEDRLRSLFYKQHPWELSRPKILVENEIGDENYDWSHMLQIGRPLDGESVIQRTMYLIKTKQYGDMVEAYDHARYEFYALRMQEETEQQVALEEAEMFGSLFGVSAIEHGIQKEQEVLDVWEKKVVEETELMAARTSNPAGSWKDDTTLNTAQEEESTTSENLHF</sequence>
<keyword id="KW-0496">Mitochondrion</keyword>
<keyword id="KW-0687">Ribonucleoprotein</keyword>
<keyword id="KW-0689">Ribosomal protein</keyword>
<accession>A6ZVI4</accession>
<feature type="chain" id="PRO_0000343564" description="Small ribosomal subunit protein mS23">
    <location>
        <begin position="1"/>
        <end position="264"/>
    </location>
</feature>
<feature type="region of interest" description="Disordered" evidence="2">
    <location>
        <begin position="233"/>
        <end position="264"/>
    </location>
</feature>
<organism>
    <name type="scientific">Saccharomyces cerevisiae (strain YJM789)</name>
    <name type="common">Baker's yeast</name>
    <dbReference type="NCBI Taxonomy" id="307796"/>
    <lineage>
        <taxon>Eukaryota</taxon>
        <taxon>Fungi</taxon>
        <taxon>Dikarya</taxon>
        <taxon>Ascomycota</taxon>
        <taxon>Saccharomycotina</taxon>
        <taxon>Saccharomycetes</taxon>
        <taxon>Saccharomycetales</taxon>
        <taxon>Saccharomycetaceae</taxon>
        <taxon>Saccharomyces</taxon>
    </lineage>
</organism>
<comment type="subunit">
    <text evidence="1">Component of the mitochondrial small ribosomal subunit. Mature mitochondrial ribosomes consist of a small (37S) and a large (54S) subunit. The 37S subunit contains at least 33 different proteins and 1 molecule of RNA (15S). The 54S subunit contains at least 45 different proteins and 1 molecule of RNA (21S) (By similarity).</text>
</comment>
<comment type="subcellular location">
    <subcellularLocation>
        <location evidence="1">Mitochondrion</location>
    </subcellularLocation>
</comment>
<comment type="similarity">
    <text evidence="3">Belongs to the mitochondrion-specific ribosomal protein mS23 family.</text>
</comment>
<protein>
    <recommendedName>
        <fullName evidence="3">Small ribosomal subunit protein mS23</fullName>
    </recommendedName>
    <alternativeName>
        <fullName>37S ribosomal protein S25, mitochondrial</fullName>
    </alternativeName>
</protein>
<name>RT25_YEAS7</name>
<dbReference type="EMBL" id="AAFW02000124">
    <property type="protein sequence ID" value="EDN61409.1"/>
    <property type="molecule type" value="Genomic_DNA"/>
</dbReference>
<dbReference type="SMR" id="A6ZVI4"/>
<dbReference type="HOGENOM" id="CLU_081350_0_0_1"/>
<dbReference type="Proteomes" id="UP000007060">
    <property type="component" value="Unassembled WGS sequence"/>
</dbReference>
<dbReference type="GO" id="GO:0005763">
    <property type="term" value="C:mitochondrial small ribosomal subunit"/>
    <property type="evidence" value="ECO:0007669"/>
    <property type="project" value="InterPro"/>
</dbReference>
<dbReference type="GO" id="GO:0003735">
    <property type="term" value="F:structural constituent of ribosome"/>
    <property type="evidence" value="ECO:0007669"/>
    <property type="project" value="InterPro"/>
</dbReference>
<dbReference type="CDD" id="cd23701">
    <property type="entry name" value="At1g26750"/>
    <property type="match status" value="1"/>
</dbReference>
<dbReference type="InterPro" id="IPR016939">
    <property type="entry name" value="Ribosomal_mS23_fun"/>
</dbReference>
<dbReference type="PANTHER" id="PTHR37799">
    <property type="entry name" value="37S RIBOSOMAL PROTEIN S25, MITOCHONDRIAL"/>
    <property type="match status" value="1"/>
</dbReference>
<dbReference type="PANTHER" id="PTHR37799:SF1">
    <property type="entry name" value="SMALL RIBOSOMAL SUBUNIT PROTEIN MS23"/>
    <property type="match status" value="1"/>
</dbReference>
<dbReference type="Pfam" id="PF13741">
    <property type="entry name" value="MRP-S25"/>
    <property type="match status" value="1"/>
</dbReference>
<dbReference type="PIRSF" id="PIRSF029764">
    <property type="entry name" value="RSM25"/>
    <property type="match status" value="1"/>
</dbReference>
<evidence type="ECO:0000250" key="1"/>
<evidence type="ECO:0000256" key="2">
    <source>
        <dbReference type="SAM" id="MobiDB-lite"/>
    </source>
</evidence>
<evidence type="ECO:0000305" key="3"/>
<proteinExistence type="inferred from homology"/>
<gene>
    <name type="primary">RSM25</name>
    <name type="ORF">SCY_2700</name>
</gene>